<proteinExistence type="evidence at protein level"/>
<accession>Q05909</accession>
<dbReference type="EC" id="3.1.3.48"/>
<dbReference type="EMBL" id="L09562">
    <property type="protein sequence ID" value="AAA40022.1"/>
    <property type="molecule type" value="mRNA"/>
</dbReference>
<dbReference type="CCDS" id="CCDS26816.1"/>
<dbReference type="PIR" id="B48148">
    <property type="entry name" value="B48148"/>
</dbReference>
<dbReference type="RefSeq" id="NP_033007.2">
    <property type="nucleotide sequence ID" value="NM_008981.3"/>
</dbReference>
<dbReference type="PDB" id="3JXG">
    <property type="method" value="X-ray"/>
    <property type="resolution" value="1.70 A"/>
    <property type="chains" value="A/B/C/D=55-320"/>
</dbReference>
<dbReference type="PDB" id="3KLD">
    <property type="method" value="X-ray"/>
    <property type="resolution" value="2.00 A"/>
    <property type="chains" value="B=55-320"/>
</dbReference>
<dbReference type="PDB" id="5E5U">
    <property type="method" value="X-ray"/>
    <property type="resolution" value="2.00 A"/>
    <property type="chains" value="A/C=57-320"/>
</dbReference>
<dbReference type="PDBsum" id="3JXG"/>
<dbReference type="PDBsum" id="3KLD"/>
<dbReference type="PDBsum" id="5E5U"/>
<dbReference type="SMR" id="Q05909"/>
<dbReference type="BioGRID" id="202498">
    <property type="interactions" value="8"/>
</dbReference>
<dbReference type="FunCoup" id="Q05909">
    <property type="interactions" value="786"/>
</dbReference>
<dbReference type="IntAct" id="Q05909">
    <property type="interactions" value="1"/>
</dbReference>
<dbReference type="STRING" id="10090.ENSMUSP00000022264"/>
<dbReference type="GlyConnect" id="2670">
    <property type="glycosylation" value="1 N-Linked glycan (1 site)"/>
</dbReference>
<dbReference type="GlyCosmos" id="Q05909">
    <property type="glycosylation" value="6 sites, 1 glycan"/>
</dbReference>
<dbReference type="GlyGen" id="Q05909">
    <property type="glycosylation" value="9 sites, 5 N-linked glycans (6 sites), 1 O-linked glycan (1 site)"/>
</dbReference>
<dbReference type="iPTMnet" id="Q05909"/>
<dbReference type="PhosphoSitePlus" id="Q05909"/>
<dbReference type="SwissPalm" id="Q05909"/>
<dbReference type="CPTAC" id="non-CPTAC-4056"/>
<dbReference type="PaxDb" id="10090-ENSMUSP00000022264"/>
<dbReference type="ProteomicsDB" id="302013"/>
<dbReference type="Pumba" id="Q05909"/>
<dbReference type="ABCD" id="Q05909">
    <property type="antibodies" value="7 sequenced antibodies"/>
</dbReference>
<dbReference type="DNASU" id="19270"/>
<dbReference type="GeneID" id="19270"/>
<dbReference type="KEGG" id="mmu:19270"/>
<dbReference type="AGR" id="MGI:97814"/>
<dbReference type="CTD" id="5793"/>
<dbReference type="MGI" id="MGI:97814">
    <property type="gene designation" value="Ptprg"/>
</dbReference>
<dbReference type="eggNOG" id="KOG0382">
    <property type="taxonomic scope" value="Eukaryota"/>
</dbReference>
<dbReference type="eggNOG" id="KOG0789">
    <property type="taxonomic scope" value="Eukaryota"/>
</dbReference>
<dbReference type="InParanoid" id="Q05909"/>
<dbReference type="OrthoDB" id="6022401at2759"/>
<dbReference type="PhylomeDB" id="Q05909"/>
<dbReference type="BioGRID-ORCS" id="19270">
    <property type="hits" value="4 hits in 80 CRISPR screens"/>
</dbReference>
<dbReference type="ChiTaRS" id="Ptprg">
    <property type="organism name" value="mouse"/>
</dbReference>
<dbReference type="EvolutionaryTrace" id="Q05909"/>
<dbReference type="PRO" id="PR:Q05909"/>
<dbReference type="Proteomes" id="UP000000589">
    <property type="component" value="Unplaced"/>
</dbReference>
<dbReference type="RNAct" id="Q05909">
    <property type="molecule type" value="protein"/>
</dbReference>
<dbReference type="GO" id="GO:0016020">
    <property type="term" value="C:membrane"/>
    <property type="evidence" value="ECO:0007669"/>
    <property type="project" value="UniProtKB-SubCell"/>
</dbReference>
<dbReference type="GO" id="GO:0042802">
    <property type="term" value="F:identical protein binding"/>
    <property type="evidence" value="ECO:0000250"/>
    <property type="project" value="UniProtKB"/>
</dbReference>
<dbReference type="GO" id="GO:0004725">
    <property type="term" value="F:protein tyrosine phosphatase activity"/>
    <property type="evidence" value="ECO:0000250"/>
    <property type="project" value="UniProtKB"/>
</dbReference>
<dbReference type="CDD" id="cd03122">
    <property type="entry name" value="alpha_CARP_receptor_like"/>
    <property type="match status" value="1"/>
</dbReference>
<dbReference type="CDD" id="cd00063">
    <property type="entry name" value="FN3"/>
    <property type="match status" value="1"/>
</dbReference>
<dbReference type="CDD" id="cd17670">
    <property type="entry name" value="R-PTP-G-2"/>
    <property type="match status" value="1"/>
</dbReference>
<dbReference type="CDD" id="cd17667">
    <property type="entry name" value="R-PTPc-G-1"/>
    <property type="match status" value="1"/>
</dbReference>
<dbReference type="FunFam" id="3.10.200.10:FF:000005">
    <property type="entry name" value="receptor-type tyrosine-protein phosphatase gamma isoform X1"/>
    <property type="match status" value="1"/>
</dbReference>
<dbReference type="FunFam" id="3.90.190.10:FF:000016">
    <property type="entry name" value="receptor-type tyrosine-protein phosphatase gamma isoform X1"/>
    <property type="match status" value="1"/>
</dbReference>
<dbReference type="FunFam" id="2.60.40.10:FF:000255">
    <property type="entry name" value="receptor-type tyrosine-protein phosphatase gamma isoform X2"/>
    <property type="match status" value="1"/>
</dbReference>
<dbReference type="FunFam" id="3.90.190.10:FF:000013">
    <property type="entry name" value="receptor-type tyrosine-protein phosphatase zeta isoform X1"/>
    <property type="match status" value="1"/>
</dbReference>
<dbReference type="Gene3D" id="3.10.200.10">
    <property type="entry name" value="Alpha carbonic anhydrase"/>
    <property type="match status" value="1"/>
</dbReference>
<dbReference type="Gene3D" id="2.60.40.10">
    <property type="entry name" value="Immunoglobulins"/>
    <property type="match status" value="1"/>
</dbReference>
<dbReference type="Gene3D" id="3.90.190.10">
    <property type="entry name" value="Protein tyrosine phosphatase superfamily"/>
    <property type="match status" value="2"/>
</dbReference>
<dbReference type="InterPro" id="IPR041887">
    <property type="entry name" value="Alpha_CARP_receptor-type"/>
</dbReference>
<dbReference type="InterPro" id="IPR001148">
    <property type="entry name" value="CA_dom"/>
</dbReference>
<dbReference type="InterPro" id="IPR036398">
    <property type="entry name" value="CA_dom_sf"/>
</dbReference>
<dbReference type="InterPro" id="IPR003961">
    <property type="entry name" value="FN3_dom"/>
</dbReference>
<dbReference type="InterPro" id="IPR036116">
    <property type="entry name" value="FN3_sf"/>
</dbReference>
<dbReference type="InterPro" id="IPR013783">
    <property type="entry name" value="Ig-like_fold"/>
</dbReference>
<dbReference type="InterPro" id="IPR029021">
    <property type="entry name" value="Prot-tyrosine_phosphatase-like"/>
</dbReference>
<dbReference type="InterPro" id="IPR050348">
    <property type="entry name" value="Protein-Tyr_Phosphatase"/>
</dbReference>
<dbReference type="InterPro" id="IPR000242">
    <property type="entry name" value="PTP_cat"/>
</dbReference>
<dbReference type="InterPro" id="IPR016130">
    <property type="entry name" value="Tyr_Pase_AS"/>
</dbReference>
<dbReference type="InterPro" id="IPR003595">
    <property type="entry name" value="Tyr_Pase_cat"/>
</dbReference>
<dbReference type="InterPro" id="IPR000387">
    <property type="entry name" value="Tyr_Pase_dom"/>
</dbReference>
<dbReference type="PANTHER" id="PTHR19134">
    <property type="entry name" value="RECEPTOR-TYPE TYROSINE-PROTEIN PHOSPHATASE"/>
    <property type="match status" value="1"/>
</dbReference>
<dbReference type="PANTHER" id="PTHR19134:SF468">
    <property type="entry name" value="RECEPTOR-TYPE TYROSINE-PROTEIN PHOSPHATASE GAMMA"/>
    <property type="match status" value="1"/>
</dbReference>
<dbReference type="Pfam" id="PF00194">
    <property type="entry name" value="Carb_anhydrase"/>
    <property type="match status" value="1"/>
</dbReference>
<dbReference type="Pfam" id="PF00041">
    <property type="entry name" value="fn3"/>
    <property type="match status" value="1"/>
</dbReference>
<dbReference type="Pfam" id="PF00102">
    <property type="entry name" value="Y_phosphatase"/>
    <property type="match status" value="2"/>
</dbReference>
<dbReference type="PRINTS" id="PR00700">
    <property type="entry name" value="PRTYPHPHTASE"/>
</dbReference>
<dbReference type="SMART" id="SM01057">
    <property type="entry name" value="Carb_anhydrase"/>
    <property type="match status" value="1"/>
</dbReference>
<dbReference type="SMART" id="SM00060">
    <property type="entry name" value="FN3"/>
    <property type="match status" value="1"/>
</dbReference>
<dbReference type="SMART" id="SM00194">
    <property type="entry name" value="PTPc"/>
    <property type="match status" value="2"/>
</dbReference>
<dbReference type="SMART" id="SM00404">
    <property type="entry name" value="PTPc_motif"/>
    <property type="match status" value="2"/>
</dbReference>
<dbReference type="SUPFAM" id="SSF52799">
    <property type="entry name" value="(Phosphotyrosine protein) phosphatases II"/>
    <property type="match status" value="2"/>
</dbReference>
<dbReference type="SUPFAM" id="SSF51069">
    <property type="entry name" value="Carbonic anhydrase"/>
    <property type="match status" value="1"/>
</dbReference>
<dbReference type="SUPFAM" id="SSF49265">
    <property type="entry name" value="Fibronectin type III"/>
    <property type="match status" value="1"/>
</dbReference>
<dbReference type="PROSITE" id="PS51144">
    <property type="entry name" value="ALPHA_CA_2"/>
    <property type="match status" value="1"/>
</dbReference>
<dbReference type="PROSITE" id="PS50853">
    <property type="entry name" value="FN3"/>
    <property type="match status" value="1"/>
</dbReference>
<dbReference type="PROSITE" id="PS00383">
    <property type="entry name" value="TYR_PHOSPHATASE_1"/>
    <property type="match status" value="1"/>
</dbReference>
<dbReference type="PROSITE" id="PS50056">
    <property type="entry name" value="TYR_PHOSPHATASE_2"/>
    <property type="match status" value="2"/>
</dbReference>
<dbReference type="PROSITE" id="PS50055">
    <property type="entry name" value="TYR_PHOSPHATASE_PTP"/>
    <property type="match status" value="2"/>
</dbReference>
<gene>
    <name type="primary">Ptprg</name>
</gene>
<organism>
    <name type="scientific">Mus musculus</name>
    <name type="common">Mouse</name>
    <dbReference type="NCBI Taxonomy" id="10090"/>
    <lineage>
        <taxon>Eukaryota</taxon>
        <taxon>Metazoa</taxon>
        <taxon>Chordata</taxon>
        <taxon>Craniata</taxon>
        <taxon>Vertebrata</taxon>
        <taxon>Euteleostomi</taxon>
        <taxon>Mammalia</taxon>
        <taxon>Eutheria</taxon>
        <taxon>Euarchontoglires</taxon>
        <taxon>Glires</taxon>
        <taxon>Rodentia</taxon>
        <taxon>Myomorpha</taxon>
        <taxon>Muroidea</taxon>
        <taxon>Muridae</taxon>
        <taxon>Murinae</taxon>
        <taxon>Mus</taxon>
        <taxon>Mus</taxon>
    </lineage>
</organism>
<sequence length="1442" mass="161243">MRRLLEPCWWILFLKITSSVLHYVVCFPALTEGYVGTLQESRQDSSVQIRRRKASGDPYWAYSGAYGPEHWVTSSVSCGGSHQSPIDILDHHARVGDEYQELQLDGFDNESSNKTWMKNTGKTVAILLKDDYFVSGAGLPGRFKAEKVEFHWGHSNGSAGSEHSVNGRRFPVEMQIFFYNPDDFDSFQTAISENRIIGAMAIFFQVSPRDNSALDPIIHGLKGVVHHEKETFLDPFILRDLLPASLGSYYRYTGSLTTPPCSEIVEWIVFRRPVPISYHQLEAFYSIFTTEQQDHVKSVEYLRNNFRPQQALNDRVVSKSAVRDAWNHDLADFLDNPLGTEASKVCSSPPIHMKVQPLNQTALQVSWSQPETIYHPPIMNYMISYSWTKNEDEKEKTFTKDSDKDLKATISHVSPDSLYLFRVQAVCRNDMRSDFSQTMLFQANTTRIFQGTRIVKTGVPTASPASSADMAPISSGSSTWTSSGIPFSFVSMATGMGPSSSGSQATVASVVTSTLLAGLGFGGGGISSFPSTVWPTRLPTASAASKQAGRTVLATTEALASPGPDVHSAPSKDSEGTEEGEKEEKSESEDGEREHEEEEKDSEKKEKSEATHTAAESDRTAPAPTPSSPHRTAAEGGHQTIPGRRQDHSAPATDQPGHVAPDLDPLVDTATQVPPTATEEHYSGSDPRRPEMPSKKPMSRGDRFSEDSKFITVNPAEKNTSGMLSRPSPGRMEWIIPLIVVSALTFVCLVLLIAVLVYWRGCNKIKSKGFPRRSREVPSSGERGEKGSRKCFQTAHFYVEDSSSPRVVPNESVPIIPIPDDMEAIPVKQFGKHIGELYSNSQHGFSEDFEEVQRCTADMNITAEHSNHPDNKHKNRYINILAYDHSRVKLRPLPGKDSKHSDYINANYVDGYNKAKAYIATQGPLKSTFEDFWRMIWEQNTGIIIMITNLVEKGRRKCDQYWPTENTEEYGNIIVTLKSTKVHACYTVRRLSVRNTKVKKGQKGNPKGRQNERTVIQYHYTQWPDMGVPEYALPVLTFVRRSSAARMPDMGPVLVHCSAGVGRTGTYIVIDSMLQQIKDKSTVNVLGFLKHIRTQRNYLVQTEEQYIFIHDALLEAILGKETAVSSSQLHSYVNSILIPGVGGKTRLEKQFKLITQCNAKYVECFSAQKECNKEKNRNSSVVPAERARVGLAPLPGMKGTDYINASYIMGYYRSNEFIITQHPLPHTTKDFWRMIWDHNAQIIVMLPDNQSLAEDEFVYWPSREESMNCEAFTVTLISKDRLCLSNEEQIIIHDFILEATQDDYVLEVRHFQCPKWPNPDAPISSTFELINVIKEEALTRDGPTIVHDEYGAVSAGMLCALTTLSQQLENENAVDVFQVAKMINLMRPGVFTDIEQYQFVYKAMLSLISTKENGNGPMTGDKNGAVLTAEESDPAESMESLV</sequence>
<feature type="signal peptide" evidence="1">
    <location>
        <begin position="1"/>
        <end position="19"/>
    </location>
</feature>
<feature type="chain" id="PRO_0000025442" description="Receptor-type tyrosine-protein phosphatase gamma">
    <location>
        <begin position="20"/>
        <end position="1442"/>
    </location>
</feature>
<feature type="topological domain" description="Extracellular" evidence="3">
    <location>
        <begin position="20"/>
        <end position="733"/>
    </location>
</feature>
<feature type="transmembrane region" description="Helical" evidence="3">
    <location>
        <begin position="734"/>
        <end position="759"/>
    </location>
</feature>
<feature type="topological domain" description="Cytoplasmic" evidence="3">
    <location>
        <begin position="760"/>
        <end position="1442"/>
    </location>
</feature>
<feature type="domain" description="Alpha-carbonic anhydrase" evidence="6">
    <location>
        <begin position="58"/>
        <end position="321"/>
    </location>
</feature>
<feature type="domain" description="Fibronectin type-III" evidence="5">
    <location>
        <begin position="349"/>
        <end position="448"/>
    </location>
</feature>
<feature type="domain" description="Tyrosine-protein phosphatase 1" evidence="4">
    <location>
        <begin position="845"/>
        <end position="1116"/>
    </location>
</feature>
<feature type="domain" description="Tyrosine-protein phosphatase 2" evidence="4">
    <location>
        <begin position="1147"/>
        <end position="1407"/>
    </location>
</feature>
<feature type="region of interest" description="Disordered" evidence="8">
    <location>
        <begin position="461"/>
        <end position="480"/>
    </location>
</feature>
<feature type="region of interest" description="Disordered" evidence="8">
    <location>
        <begin position="557"/>
        <end position="726"/>
    </location>
</feature>
<feature type="region of interest" description="Disordered" evidence="8">
    <location>
        <begin position="769"/>
        <end position="788"/>
    </location>
</feature>
<feature type="region of interest" description="Disordered" evidence="8">
    <location>
        <begin position="1412"/>
        <end position="1442"/>
    </location>
</feature>
<feature type="compositionally biased region" description="Acidic residues" evidence="8">
    <location>
        <begin position="576"/>
        <end position="600"/>
    </location>
</feature>
<feature type="compositionally biased region" description="Basic and acidic residues" evidence="8">
    <location>
        <begin position="601"/>
        <end position="619"/>
    </location>
</feature>
<feature type="compositionally biased region" description="Basic and acidic residues" evidence="8">
    <location>
        <begin position="678"/>
        <end position="709"/>
    </location>
</feature>
<feature type="active site" description="Phosphocysteine intermediate" evidence="4 7">
    <location>
        <position position="1057"/>
    </location>
</feature>
<feature type="binding site" evidence="1">
    <location>
        <position position="1025"/>
    </location>
    <ligand>
        <name>substrate</name>
    </ligand>
</feature>
<feature type="binding site" evidence="1">
    <location>
        <begin position="1057"/>
        <end position="1063"/>
    </location>
    <ligand>
        <name>substrate</name>
    </ligand>
</feature>
<feature type="binding site" evidence="1">
    <location>
        <position position="1101"/>
    </location>
    <ligand>
        <name>substrate</name>
    </ligand>
</feature>
<feature type="site" description="Ancestral active site">
    <location>
        <position position="1348"/>
    </location>
</feature>
<feature type="modified residue" description="Phosphoserine" evidence="2">
    <location>
        <position position="1179"/>
    </location>
</feature>
<feature type="glycosylation site" description="N-linked (GlcNAc...) asparagine" evidence="3">
    <location>
        <position position="109"/>
    </location>
</feature>
<feature type="glycosylation site" description="N-linked (GlcNAc...) asparagine" evidence="3">
    <location>
        <position position="113"/>
    </location>
</feature>
<feature type="glycosylation site" description="N-linked (GlcNAc...) asparagine" evidence="3">
    <location>
        <position position="156"/>
    </location>
</feature>
<feature type="glycosylation site" description="N-linked (GlcNAc...) asparagine" evidence="3">
    <location>
        <position position="359"/>
    </location>
</feature>
<feature type="glycosylation site" description="N-linked (GlcNAc...) asparagine" evidence="3">
    <location>
        <position position="444"/>
    </location>
</feature>
<feature type="glycosylation site" description="N-linked (GlcNAc...) asparagine" evidence="3">
    <location>
        <position position="719"/>
    </location>
</feature>
<feature type="disulfide bond" evidence="9">
    <location>
        <begin position="78"/>
        <end position="261"/>
    </location>
</feature>
<feature type="helix" evidence="11">
    <location>
        <begin position="64"/>
        <end position="66"/>
    </location>
</feature>
<feature type="helix" evidence="11">
    <location>
        <begin position="68"/>
        <end position="73"/>
    </location>
</feature>
<feature type="helix" evidence="11">
    <location>
        <begin position="76"/>
        <end position="79"/>
    </location>
</feature>
<feature type="helix" evidence="11">
    <location>
        <begin position="90"/>
        <end position="92"/>
    </location>
</feature>
<feature type="strand" evidence="11">
    <location>
        <begin position="93"/>
        <end position="95"/>
    </location>
</feature>
<feature type="strand" evidence="11">
    <location>
        <begin position="103"/>
        <end position="106"/>
    </location>
</feature>
<feature type="strand" evidence="11">
    <location>
        <begin position="116"/>
        <end position="119"/>
    </location>
</feature>
<feature type="strand" evidence="11">
    <location>
        <begin position="124"/>
        <end position="127"/>
    </location>
</feature>
<feature type="strand" evidence="11">
    <location>
        <begin position="133"/>
        <end position="135"/>
    </location>
</feature>
<feature type="strand" evidence="11">
    <location>
        <begin position="143"/>
        <end position="152"/>
    </location>
</feature>
<feature type="strand" evidence="11">
    <location>
        <begin position="162"/>
        <end position="165"/>
    </location>
</feature>
<feature type="strand" evidence="11">
    <location>
        <begin position="171"/>
        <end position="179"/>
    </location>
</feature>
<feature type="turn" evidence="11">
    <location>
        <begin position="181"/>
        <end position="183"/>
    </location>
</feature>
<feature type="helix" evidence="11">
    <location>
        <begin position="187"/>
        <end position="192"/>
    </location>
</feature>
<feature type="strand" evidence="11">
    <location>
        <begin position="197"/>
        <end position="206"/>
    </location>
</feature>
<feature type="helix" evidence="11">
    <location>
        <begin position="212"/>
        <end position="214"/>
    </location>
</feature>
<feature type="helix" evidence="11">
    <location>
        <begin position="215"/>
        <end position="222"/>
    </location>
</feature>
<feature type="strand" evidence="11">
    <location>
        <begin position="230"/>
        <end position="232"/>
    </location>
</feature>
<feature type="helix" evidence="11">
    <location>
        <begin position="238"/>
        <end position="241"/>
    </location>
</feature>
<feature type="strand" evidence="11">
    <location>
        <begin position="249"/>
        <end position="254"/>
    </location>
</feature>
<feature type="strand" evidence="11">
    <location>
        <begin position="265"/>
        <end position="272"/>
    </location>
</feature>
<feature type="strand" evidence="11">
    <location>
        <begin position="274"/>
        <end position="276"/>
    </location>
</feature>
<feature type="helix" evidence="11">
    <location>
        <begin position="278"/>
        <end position="285"/>
    </location>
</feature>
<feature type="strand" evidence="11">
    <location>
        <begin position="288"/>
        <end position="290"/>
    </location>
</feature>
<feature type="strand" evidence="11">
    <location>
        <begin position="299"/>
        <end position="301"/>
    </location>
</feature>
<protein>
    <recommendedName>
        <fullName>Receptor-type tyrosine-protein phosphatase gamma</fullName>
        <shortName>Protein-tyrosine phosphatase gamma</shortName>
        <shortName>R-PTP-gamma</shortName>
        <ecNumber>3.1.3.48</ecNumber>
    </recommendedName>
</protein>
<reference key="1">
    <citation type="journal article" date="1993" name="Mol. Cell. Biol.">
        <title>Identification of a carbonic anhydrase-like domain in the extracellular region of RPTP gamma defines a new subfamily of receptor tyrosine phosphatases.</title>
        <authorList>
            <person name="Barnea G."/>
            <person name="Silvennoinen O."/>
            <person name="Shaanan B."/>
            <person name="Honegger A.M."/>
            <person name="Canoll P.D."/>
            <person name="D'Eustachio P."/>
            <person name="Morse B."/>
            <person name="Levy J.B."/>
            <person name="Laforgia S."/>
            <person name="Huebner K."/>
            <person name="Musacchio J.M."/>
            <person name="Sap J."/>
            <person name="Schlessinger J."/>
        </authorList>
    </citation>
    <scope>NUCLEOTIDE SEQUENCE [MRNA]</scope>
</reference>
<reference key="2">
    <citation type="journal article" date="2010" name="Cell">
        <title>A tissue-specific atlas of mouse protein phosphorylation and expression.</title>
        <authorList>
            <person name="Huttlin E.L."/>
            <person name="Jedrychowski M.P."/>
            <person name="Elias J.E."/>
            <person name="Goswami T."/>
            <person name="Rad R."/>
            <person name="Beausoleil S.A."/>
            <person name="Villen J."/>
            <person name="Haas W."/>
            <person name="Sowa M.E."/>
            <person name="Gygi S.P."/>
        </authorList>
    </citation>
    <scope>IDENTIFICATION BY MASS SPECTROMETRY [LARGE SCALE ANALYSIS]</scope>
    <source>
        <tissue>Brain</tissue>
        <tissue>Brown adipose tissue</tissue>
        <tissue>Heart</tissue>
        <tissue>Kidney</tissue>
        <tissue>Lung</tissue>
    </source>
</reference>
<reference key="3">
    <citation type="journal article" date="2010" name="Proc. Natl. Acad. Sci. U.S.A.">
        <title>The protein tyrosine phosphatases PTPRZ and PTPRG bind to distinct members of the contactin family of neural recognition molecules.</title>
        <authorList>
            <person name="Bouyain S."/>
            <person name="Watkins D.J."/>
        </authorList>
    </citation>
    <scope>X-RAY CRYSTALLOGRAPHY (1.7 ANGSTROMS) OF 55-320 IN COMPLEX WITH CNTN4</scope>
    <scope>INTERACTION WITH CNTN3; CNTN4; CNTN5 AND CNTN6</scope>
    <scope>DISULFIDE BOND</scope>
</reference>
<evidence type="ECO:0000250" key="1"/>
<evidence type="ECO:0000250" key="2">
    <source>
        <dbReference type="UniProtKB" id="P23470"/>
    </source>
</evidence>
<evidence type="ECO:0000255" key="3"/>
<evidence type="ECO:0000255" key="4">
    <source>
        <dbReference type="PROSITE-ProRule" id="PRU00160"/>
    </source>
</evidence>
<evidence type="ECO:0000255" key="5">
    <source>
        <dbReference type="PROSITE-ProRule" id="PRU00316"/>
    </source>
</evidence>
<evidence type="ECO:0000255" key="6">
    <source>
        <dbReference type="PROSITE-ProRule" id="PRU01134"/>
    </source>
</evidence>
<evidence type="ECO:0000255" key="7">
    <source>
        <dbReference type="PROSITE-ProRule" id="PRU10044"/>
    </source>
</evidence>
<evidence type="ECO:0000256" key="8">
    <source>
        <dbReference type="SAM" id="MobiDB-lite"/>
    </source>
</evidence>
<evidence type="ECO:0000269" key="9">
    <source>
    </source>
</evidence>
<evidence type="ECO:0000305" key="10"/>
<evidence type="ECO:0007829" key="11">
    <source>
        <dbReference type="PDB" id="3JXG"/>
    </source>
</evidence>
<keyword id="KW-0002">3D-structure</keyword>
<keyword id="KW-1015">Disulfide bond</keyword>
<keyword id="KW-0325">Glycoprotein</keyword>
<keyword id="KW-0378">Hydrolase</keyword>
<keyword id="KW-0472">Membrane</keyword>
<keyword id="KW-0597">Phosphoprotein</keyword>
<keyword id="KW-0904">Protein phosphatase</keyword>
<keyword id="KW-1185">Reference proteome</keyword>
<keyword id="KW-0677">Repeat</keyword>
<keyword id="KW-0732">Signal</keyword>
<keyword id="KW-0812">Transmembrane</keyword>
<keyword id="KW-1133">Transmembrane helix</keyword>
<comment type="function">
    <text evidence="1">Possesses tyrosine phosphatase activity.</text>
</comment>
<comment type="catalytic activity">
    <reaction evidence="7">
        <text>O-phospho-L-tyrosyl-[protein] + H2O = L-tyrosyl-[protein] + phosphate</text>
        <dbReference type="Rhea" id="RHEA:10684"/>
        <dbReference type="Rhea" id="RHEA-COMP:10136"/>
        <dbReference type="Rhea" id="RHEA-COMP:20101"/>
        <dbReference type="ChEBI" id="CHEBI:15377"/>
        <dbReference type="ChEBI" id="CHEBI:43474"/>
        <dbReference type="ChEBI" id="CHEBI:46858"/>
        <dbReference type="ChEBI" id="CHEBI:61978"/>
        <dbReference type="EC" id="3.1.3.48"/>
    </reaction>
</comment>
<comment type="subunit">
    <text evidence="1 9">Monomer; active form. Homodimer; inactive form (By similarity). Interacts with CNTN3, CNTN4, CNTN5 and CNTN6.</text>
</comment>
<comment type="subcellular location">
    <subcellularLocation>
        <location evidence="10">Membrane</location>
        <topology evidence="10">Single-pass type I membrane protein</topology>
    </subcellularLocation>
</comment>
<comment type="tissue specificity">
    <text>Detected in brain, lung, kidney, heart, liver, skeletal muscle, spleen and testes. It is developmentally regulated in the brain.</text>
</comment>
<comment type="similarity">
    <text evidence="10">Belongs to the protein-tyrosine phosphatase family. Receptor class 5 subfamily.</text>
</comment>
<name>PTPRG_MOUSE</name>